<accession>A9C3R9</accession>
<accession>A4FVJ4</accession>
<accession>A9JRQ7</accession>
<accession>Q4L0V3</accession>
<gene>
    <name type="primary">rpe65b</name>
    <name type="synonym">rpepb</name>
    <name type="ORF">si:ch211-198n5.5</name>
</gene>
<organism>
    <name type="scientific">Danio rerio</name>
    <name type="common">Zebrafish</name>
    <name type="synonym">Brachydanio rerio</name>
    <dbReference type="NCBI Taxonomy" id="7955"/>
    <lineage>
        <taxon>Eukaryota</taxon>
        <taxon>Metazoa</taxon>
        <taxon>Chordata</taxon>
        <taxon>Craniata</taxon>
        <taxon>Vertebrata</taxon>
        <taxon>Euteleostomi</taxon>
        <taxon>Actinopterygii</taxon>
        <taxon>Neopterygii</taxon>
        <taxon>Teleostei</taxon>
        <taxon>Ostariophysi</taxon>
        <taxon>Cypriniformes</taxon>
        <taxon>Danionidae</taxon>
        <taxon>Danioninae</taxon>
        <taxon>Danio</taxon>
    </lineage>
</organism>
<comment type="function">
    <text evidence="1 4">Specifically generates 13-cis retinol, a stereoisomeric form of retinoic acid. Capable of catalyzing the isomerization of lutein to meso-zeaxanthin an eye-specific carotenoid (By similarity).</text>
</comment>
<comment type="catalytic activity">
    <reaction evidence="4">
        <text>an all-trans-retinyl ester + H2O = 13-cis-retinol + a fatty acid + H(+)</text>
        <dbReference type="Rhea" id="RHEA:31779"/>
        <dbReference type="ChEBI" id="CHEBI:15377"/>
        <dbReference type="ChEBI" id="CHEBI:15378"/>
        <dbReference type="ChEBI" id="CHEBI:28868"/>
        <dbReference type="ChEBI" id="CHEBI:45479"/>
        <dbReference type="ChEBI" id="CHEBI:63410"/>
        <dbReference type="EC" id="3.1.1.90"/>
    </reaction>
</comment>
<comment type="catalytic activity">
    <reaction evidence="1">
        <text>lutein = (3R,3'S)-zeaxanthin</text>
        <dbReference type="Rhea" id="RHEA:12729"/>
        <dbReference type="ChEBI" id="CHEBI:28838"/>
        <dbReference type="ChEBI" id="CHEBI:138919"/>
        <dbReference type="EC" id="5.3.3.22"/>
    </reaction>
</comment>
<comment type="cofactor">
    <cofactor evidence="6">
        <name>Fe(2+)</name>
        <dbReference type="ChEBI" id="CHEBI:29033"/>
    </cofactor>
    <text evidence="6">Binds 1 Fe(2+) ion per subunit.</text>
</comment>
<comment type="biophysicochemical properties">
    <kinetics>
        <KM evidence="4">2.6 uM for all-trans-retinyl ester</KM>
        <text>kcat is 0.00044 sec(-1) with all-trans-retinyl ester as substrate.</text>
    </kinetics>
</comment>
<comment type="subcellular location">
    <subcellularLocation>
        <location evidence="4">Cytoplasm</location>
    </subcellularLocation>
    <subcellularLocation>
        <location evidence="4">Cell membrane</location>
        <topology evidence="4">Lipid-anchor</topology>
    </subcellularLocation>
    <text evidence="2">Attached to the membrane by a lipid anchor when palmitoylated (membrane form), soluble when unpalmitoylated.</text>
</comment>
<comment type="tissue specificity">
    <text evidence="4">Predominantly expressed in brain. Expressed at a low level in the eye.</text>
</comment>
<comment type="developmental stage">
    <text evidence="3">Detectable in migrating neural crest cells during somitogenesis. At early larval stages, expression is visible in the ventricular zone, the upper and lower jaw and the developing pectoral fins. At later larval stages, expression fades out.</text>
</comment>
<comment type="PTM">
    <text evidence="2">Palmitoylated.</text>
</comment>
<comment type="similarity">
    <text evidence="5">Belongs to the carotenoid oxygenase family.</text>
</comment>
<sequence length="532" mass="60613">MVSRLEHPAGGYKKVFESCEELAEPIPAHVSGKIPAWLSGSLLRMGPGLFEIGDEPFNHLFDGQALIHKFDLKDGRVTYHRKFIRTDAYVRAMTEKRVVITELGTAAYPDPCKNIFSRFFTYFQGTEVTDNCSVNIYPIGEDFYACTETNFITKVNPDTLETIKKVDLCNYLSVNGLTAHPHIEADGTVYNIGNCFGKNMSLAYNIVKIPPLQEEKSDPLAMSKVLVQFPSSERFKPSYVHSFGMTENHFVFVETPVKINLLKFLTSWSIRGSNYMDCFESNDRMGTWFHLAAKNPGKYIDHKFRTSAFNIFHHINCFEDQGFIVVDLCTWKGHEFVYNYLYLANLRQNWEEVKKAALRAPQPEVRRYVLPLDIHREEQGKNLVSLPYTTATAVMCSDGTVWLEPEVLFSGPRQAFEFPQINYSKFNGKDYTFAYGLGLNHFVPDRICKLNVKSKETWIWQEPDAYPSEPLFVQSPDAEDEDDGVLLSIVVKPGVSQRPAFLLILKATDLTEIARAEVDVLIPLTLHGIYKP</sequence>
<keyword id="KW-1003">Cell membrane</keyword>
<keyword id="KW-0963">Cytoplasm</keyword>
<keyword id="KW-0378">Hydrolase</keyword>
<keyword id="KW-0408">Iron</keyword>
<keyword id="KW-0413">Isomerase</keyword>
<keyword id="KW-0449">Lipoprotein</keyword>
<keyword id="KW-0472">Membrane</keyword>
<keyword id="KW-0479">Metal-binding</keyword>
<keyword id="KW-0564">Palmitate</keyword>
<keyword id="KW-1185">Reference proteome</keyword>
<name>RP65B_DANRE</name>
<reference key="1">
    <citation type="journal article" date="2007" name="Eur. J. Neurosci.">
        <title>Evidence for RPE65-independent vision in the cone-dominated zebrafish retina.</title>
        <authorList>
            <person name="Schonthaler H.B."/>
            <person name="Lampert J.M."/>
            <person name="Isken A."/>
            <person name="Rinner O."/>
            <person name="Mader A."/>
            <person name="Gesemann M."/>
            <person name="Oberhauser V."/>
            <person name="Golczak M."/>
            <person name="Biehlmaier O."/>
            <person name="Palczewski K."/>
            <person name="Neuhauss S.C."/>
            <person name="von Lintig J."/>
        </authorList>
    </citation>
    <scope>NUCLEOTIDE SEQUENCE [MRNA]</scope>
    <scope>DEVELOPMENTAL STAGE</scope>
</reference>
<reference key="2">
    <citation type="journal article" date="2013" name="Nature">
        <title>The zebrafish reference genome sequence and its relationship to the human genome.</title>
        <authorList>
            <person name="Howe K."/>
            <person name="Clark M.D."/>
            <person name="Torroja C.F."/>
            <person name="Torrance J."/>
            <person name="Berthelot C."/>
            <person name="Muffato M."/>
            <person name="Collins J.E."/>
            <person name="Humphray S."/>
            <person name="McLaren K."/>
            <person name="Matthews L."/>
            <person name="McLaren S."/>
            <person name="Sealy I."/>
            <person name="Caccamo M."/>
            <person name="Churcher C."/>
            <person name="Scott C."/>
            <person name="Barrett J.C."/>
            <person name="Koch R."/>
            <person name="Rauch G.J."/>
            <person name="White S."/>
            <person name="Chow W."/>
            <person name="Kilian B."/>
            <person name="Quintais L.T."/>
            <person name="Guerra-Assuncao J.A."/>
            <person name="Zhou Y."/>
            <person name="Gu Y."/>
            <person name="Yen J."/>
            <person name="Vogel J.H."/>
            <person name="Eyre T."/>
            <person name="Redmond S."/>
            <person name="Banerjee R."/>
            <person name="Chi J."/>
            <person name="Fu B."/>
            <person name="Langley E."/>
            <person name="Maguire S.F."/>
            <person name="Laird G.K."/>
            <person name="Lloyd D."/>
            <person name="Kenyon E."/>
            <person name="Donaldson S."/>
            <person name="Sehra H."/>
            <person name="Almeida-King J."/>
            <person name="Loveland J."/>
            <person name="Trevanion S."/>
            <person name="Jones M."/>
            <person name="Quail M."/>
            <person name="Willey D."/>
            <person name="Hunt A."/>
            <person name="Burton J."/>
            <person name="Sims S."/>
            <person name="McLay K."/>
            <person name="Plumb B."/>
            <person name="Davis J."/>
            <person name="Clee C."/>
            <person name="Oliver K."/>
            <person name="Clark R."/>
            <person name="Riddle C."/>
            <person name="Elliot D."/>
            <person name="Threadgold G."/>
            <person name="Harden G."/>
            <person name="Ware D."/>
            <person name="Begum S."/>
            <person name="Mortimore B."/>
            <person name="Kerry G."/>
            <person name="Heath P."/>
            <person name="Phillimore B."/>
            <person name="Tracey A."/>
            <person name="Corby N."/>
            <person name="Dunn M."/>
            <person name="Johnson C."/>
            <person name="Wood J."/>
            <person name="Clark S."/>
            <person name="Pelan S."/>
            <person name="Griffiths G."/>
            <person name="Smith M."/>
            <person name="Glithero R."/>
            <person name="Howden P."/>
            <person name="Barker N."/>
            <person name="Lloyd C."/>
            <person name="Stevens C."/>
            <person name="Harley J."/>
            <person name="Holt K."/>
            <person name="Panagiotidis G."/>
            <person name="Lovell J."/>
            <person name="Beasley H."/>
            <person name="Henderson C."/>
            <person name="Gordon D."/>
            <person name="Auger K."/>
            <person name="Wright D."/>
            <person name="Collins J."/>
            <person name="Raisen C."/>
            <person name="Dyer L."/>
            <person name="Leung K."/>
            <person name="Robertson L."/>
            <person name="Ambridge K."/>
            <person name="Leongamornlert D."/>
            <person name="McGuire S."/>
            <person name="Gilderthorp R."/>
            <person name="Griffiths C."/>
            <person name="Manthravadi D."/>
            <person name="Nichol S."/>
            <person name="Barker G."/>
            <person name="Whitehead S."/>
            <person name="Kay M."/>
            <person name="Brown J."/>
            <person name="Murnane C."/>
            <person name="Gray E."/>
            <person name="Humphries M."/>
            <person name="Sycamore N."/>
            <person name="Barker D."/>
            <person name="Saunders D."/>
            <person name="Wallis J."/>
            <person name="Babbage A."/>
            <person name="Hammond S."/>
            <person name="Mashreghi-Mohammadi M."/>
            <person name="Barr L."/>
            <person name="Martin S."/>
            <person name="Wray P."/>
            <person name="Ellington A."/>
            <person name="Matthews N."/>
            <person name="Ellwood M."/>
            <person name="Woodmansey R."/>
            <person name="Clark G."/>
            <person name="Cooper J."/>
            <person name="Tromans A."/>
            <person name="Grafham D."/>
            <person name="Skuce C."/>
            <person name="Pandian R."/>
            <person name="Andrews R."/>
            <person name="Harrison E."/>
            <person name="Kimberley A."/>
            <person name="Garnett J."/>
            <person name="Fosker N."/>
            <person name="Hall R."/>
            <person name="Garner P."/>
            <person name="Kelly D."/>
            <person name="Bird C."/>
            <person name="Palmer S."/>
            <person name="Gehring I."/>
            <person name="Berger A."/>
            <person name="Dooley C.M."/>
            <person name="Ersan-Urun Z."/>
            <person name="Eser C."/>
            <person name="Geiger H."/>
            <person name="Geisler M."/>
            <person name="Karotki L."/>
            <person name="Kirn A."/>
            <person name="Konantz J."/>
            <person name="Konantz M."/>
            <person name="Oberlander M."/>
            <person name="Rudolph-Geiger S."/>
            <person name="Teucke M."/>
            <person name="Lanz C."/>
            <person name="Raddatz G."/>
            <person name="Osoegawa K."/>
            <person name="Zhu B."/>
            <person name="Rapp A."/>
            <person name="Widaa S."/>
            <person name="Langford C."/>
            <person name="Yang F."/>
            <person name="Schuster S.C."/>
            <person name="Carter N.P."/>
            <person name="Harrow J."/>
            <person name="Ning Z."/>
            <person name="Herrero J."/>
            <person name="Searle S.M."/>
            <person name="Enright A."/>
            <person name="Geisler R."/>
            <person name="Plasterk R.H."/>
            <person name="Lee C."/>
            <person name="Westerfield M."/>
            <person name="de Jong P.J."/>
            <person name="Zon L.I."/>
            <person name="Postlethwait J.H."/>
            <person name="Nusslein-Volhard C."/>
            <person name="Hubbard T.J."/>
            <person name="Roest Crollius H."/>
            <person name="Rogers J."/>
            <person name="Stemple D.L."/>
        </authorList>
    </citation>
    <scope>NUCLEOTIDE SEQUENCE [LARGE SCALE GENOMIC DNA]</scope>
    <source>
        <strain>Tuebingen</strain>
    </source>
</reference>
<reference key="3">
    <citation type="submission" date="2007-12" db="EMBL/GenBank/DDBJ databases">
        <authorList>
            <consortium name="NIH - Zebrafish Gene Collection (ZGC) project"/>
        </authorList>
    </citation>
    <scope>NUCLEOTIDE SEQUENCE [LARGE SCALE MRNA]</scope>
    <source>
        <tissue>Embryo</tissue>
    </source>
</reference>
<reference key="4">
    <citation type="journal article" date="2011" name="FEBS J.">
        <title>An enzymatic mechanism for generating the precursor of endogenous 13-cis retinoic acid in the brain.</title>
        <authorList>
            <person name="Takahashi Y."/>
            <person name="Moiseyev G."/>
            <person name="Chen Y."/>
            <person name="Farjo K."/>
            <person name="Nikolaeva O."/>
            <person name="Ma J.X."/>
        </authorList>
    </citation>
    <scope>FUNCTION</scope>
    <scope>CATALYTIC ACTIVITY</scope>
    <scope>COFACTOR</scope>
    <scope>BIOPHYSICOCHEMICAL PROPERTIES</scope>
    <scope>SUBCELLULAR LOCATION</scope>
    <scope>TISSUE SPECIFICITY</scope>
</reference>
<dbReference type="EC" id="3.1.1.90" evidence="4"/>
<dbReference type="EC" id="5.3.3.22" evidence="1"/>
<dbReference type="EMBL" id="AY646887">
    <property type="protein sequence ID" value="AAV65108.1"/>
    <property type="molecule type" value="mRNA"/>
</dbReference>
<dbReference type="EMBL" id="CR759968">
    <property type="protein sequence ID" value="CAP19512.1"/>
    <property type="molecule type" value="Genomic_DNA"/>
</dbReference>
<dbReference type="EMBL" id="BC133985">
    <property type="protein sequence ID" value="AAI33986.1"/>
    <property type="molecule type" value="mRNA"/>
</dbReference>
<dbReference type="EMBL" id="BC155753">
    <property type="protein sequence ID" value="AAI55754.1"/>
    <property type="molecule type" value="mRNA"/>
</dbReference>
<dbReference type="RefSeq" id="NP_001082902.2">
    <property type="nucleotide sequence ID" value="NM_001089433.2"/>
</dbReference>
<dbReference type="SMR" id="A9C3R9"/>
<dbReference type="FunCoup" id="A9C3R9">
    <property type="interactions" value="48"/>
</dbReference>
<dbReference type="STRING" id="7955.ENSDARP00000071014"/>
<dbReference type="PaxDb" id="7955-ENSDARP00000071014"/>
<dbReference type="PeptideAtlas" id="A9C3R9"/>
<dbReference type="DNASU" id="100002865"/>
<dbReference type="Ensembl" id="ENSDART00000076542">
    <property type="protein sequence ID" value="ENSDARP00000071014"/>
    <property type="gene ID" value="ENSDARG00000094752"/>
</dbReference>
<dbReference type="GeneID" id="100002865"/>
<dbReference type="KEGG" id="dre:100002865"/>
<dbReference type="AGR" id="ZFIN:ZDB-GENE-050410-16"/>
<dbReference type="CTD" id="100002865"/>
<dbReference type="ZFIN" id="ZDB-GENE-050410-16">
    <property type="gene designation" value="rpe65b"/>
</dbReference>
<dbReference type="eggNOG" id="KOG1285">
    <property type="taxonomic scope" value="Eukaryota"/>
</dbReference>
<dbReference type="HOGENOM" id="CLU_016472_1_1_1"/>
<dbReference type="InParanoid" id="A9C3R9"/>
<dbReference type="OrthoDB" id="1069523at2759"/>
<dbReference type="PhylomeDB" id="A9C3R9"/>
<dbReference type="TreeFam" id="TF314019"/>
<dbReference type="BioCyc" id="MetaCyc:MONOMER-16789"/>
<dbReference type="BRENDA" id="3.1.1.64">
    <property type="organism ID" value="928"/>
</dbReference>
<dbReference type="PRO" id="PR:A9C3R9"/>
<dbReference type="Proteomes" id="UP000000437">
    <property type="component" value="Alternate scaffold 8"/>
</dbReference>
<dbReference type="Proteomes" id="UP000000437">
    <property type="component" value="Chromosome 8"/>
</dbReference>
<dbReference type="Bgee" id="ENSDARG00000094752">
    <property type="expression patterns" value="Expressed in zone of skin and 12 other cell types or tissues"/>
</dbReference>
<dbReference type="ExpressionAtlas" id="A9C3R9">
    <property type="expression patterns" value="baseline and differential"/>
</dbReference>
<dbReference type="GO" id="GO:0005789">
    <property type="term" value="C:endoplasmic reticulum membrane"/>
    <property type="evidence" value="ECO:0000250"/>
    <property type="project" value="UniProtKB"/>
</dbReference>
<dbReference type="GO" id="GO:0005886">
    <property type="term" value="C:plasma membrane"/>
    <property type="evidence" value="ECO:0007669"/>
    <property type="project" value="UniProtKB-SubCell"/>
</dbReference>
<dbReference type="GO" id="GO:0052885">
    <property type="term" value="F:all-trans-retinyl-ester hydrolase, 11-cis retinol forming activity"/>
    <property type="evidence" value="ECO:0000318"/>
    <property type="project" value="GO_Central"/>
</dbReference>
<dbReference type="GO" id="GO:0003834">
    <property type="term" value="F:beta-carotene 15,15'-dioxygenase activity"/>
    <property type="evidence" value="ECO:0000318"/>
    <property type="project" value="GO_Central"/>
</dbReference>
<dbReference type="GO" id="GO:0046872">
    <property type="term" value="F:metal ion binding"/>
    <property type="evidence" value="ECO:0007669"/>
    <property type="project" value="UniProtKB-KW"/>
</dbReference>
<dbReference type="GO" id="GO:0050251">
    <property type="term" value="F:retinol isomerase activity"/>
    <property type="evidence" value="ECO:0000318"/>
    <property type="project" value="GO_Central"/>
</dbReference>
<dbReference type="GO" id="GO:0042574">
    <property type="term" value="P:retinal metabolic process"/>
    <property type="evidence" value="ECO:0000318"/>
    <property type="project" value="GO_Central"/>
</dbReference>
<dbReference type="GO" id="GO:0001523">
    <property type="term" value="P:retinoid metabolic process"/>
    <property type="evidence" value="ECO:0000250"/>
    <property type="project" value="UniProtKB"/>
</dbReference>
<dbReference type="GO" id="GO:1901827">
    <property type="term" value="P:zeaxanthin biosynthetic process"/>
    <property type="evidence" value="ECO:0000318"/>
    <property type="project" value="GO_Central"/>
</dbReference>
<dbReference type="InterPro" id="IPR004294">
    <property type="entry name" value="Carotenoid_Oase"/>
</dbReference>
<dbReference type="PANTHER" id="PTHR10543:SF43">
    <property type="entry name" value="ALL-TRANS-RETINYL ESTER 13-CIS ISOMEROHYDROLASE-RELATED"/>
    <property type="match status" value="1"/>
</dbReference>
<dbReference type="PANTHER" id="PTHR10543">
    <property type="entry name" value="BETA-CAROTENE DIOXYGENASE"/>
    <property type="match status" value="1"/>
</dbReference>
<dbReference type="Pfam" id="PF03055">
    <property type="entry name" value="RPE65"/>
    <property type="match status" value="1"/>
</dbReference>
<feature type="chain" id="PRO_0000418731" description="All-trans-retinyl ester 13-cis isomerohydrolase">
    <location>
        <begin position="1"/>
        <end position="532"/>
    </location>
</feature>
<feature type="binding site" evidence="2">
    <location>
        <position position="180"/>
    </location>
    <ligand>
        <name>Fe cation</name>
        <dbReference type="ChEBI" id="CHEBI:24875"/>
        <note>catalytic</note>
    </ligand>
</feature>
<feature type="binding site" evidence="2">
    <location>
        <position position="241"/>
    </location>
    <ligand>
        <name>Fe cation</name>
        <dbReference type="ChEBI" id="CHEBI:24875"/>
        <note>catalytic</note>
    </ligand>
</feature>
<feature type="binding site" evidence="2">
    <location>
        <position position="313"/>
    </location>
    <ligand>
        <name>Fe cation</name>
        <dbReference type="ChEBI" id="CHEBI:24875"/>
        <note>catalytic</note>
    </ligand>
</feature>
<feature type="binding site" evidence="2">
    <location>
        <position position="527"/>
    </location>
    <ligand>
        <name>Fe cation</name>
        <dbReference type="ChEBI" id="CHEBI:24875"/>
        <note>catalytic</note>
    </ligand>
</feature>
<feature type="lipid moiety-binding region" description="S-palmitoyl cysteine; in membrane form" evidence="2">
    <location>
        <position position="112"/>
    </location>
</feature>
<feature type="lipid moiety-binding region" description="S-palmitoyl cysteine; in membrane form" evidence="2">
    <location>
        <position position="329"/>
    </location>
</feature>
<feature type="sequence conflict" description="In Ref. 1; AAV65108." evidence="5" ref="1">
    <original>C</original>
    <variation>R</variation>
    <location>
        <position position="19"/>
    </location>
</feature>
<feature type="sequence conflict" description="In Ref. 1; AAV65108." evidence="5" ref="1">
    <original>K</original>
    <variation>E</variation>
    <location>
        <position position="33"/>
    </location>
</feature>
<feature type="sequence conflict" description="In Ref. 1; AAV65108." evidence="5" ref="1">
    <original>I</original>
    <variation>V</variation>
    <location>
        <position position="52"/>
    </location>
</feature>
<feature type="sequence conflict" description="In Ref. 1; AAV65108." evidence="5" ref="1">
    <original>N</original>
    <variation>Y</variation>
    <location>
        <position position="58"/>
    </location>
</feature>
<feature type="sequence conflict" description="In Ref. 1; AAV65108." evidence="5" ref="1">
    <original>LI</original>
    <variation>PL</variation>
    <location>
        <begin position="66"/>
        <end position="67"/>
    </location>
</feature>
<feature type="sequence conflict" description="In Ref. 1; AAV65108." evidence="5" ref="1">
    <original>K</original>
    <variation>R</variation>
    <location>
        <position position="82"/>
    </location>
</feature>
<feature type="sequence conflict" description="In Ref. 1; AAV65108." evidence="5" ref="1">
    <original>V</original>
    <variation>A</variation>
    <location>
        <position position="99"/>
    </location>
</feature>
<feature type="sequence conflict" description="In Ref. 1; AAV65108." evidence="5" ref="1">
    <original>A</original>
    <variation>T</variation>
    <location>
        <position position="106"/>
    </location>
</feature>
<feature type="sequence conflict" description="In Ref. 1; AAV65108." evidence="5" ref="1">
    <original>T</original>
    <variation>I</variation>
    <location>
        <position position="126"/>
    </location>
</feature>
<feature type="sequence conflict" description="In Ref. 1; AAV65108." evidence="5" ref="1">
    <original>S</original>
    <variation>L</variation>
    <location>
        <position position="133"/>
    </location>
</feature>
<feature type="sequence conflict" description="In Ref. 3; AAI33986." evidence="5" ref="3">
    <original>N</original>
    <variation>D</variation>
    <location>
        <position position="156"/>
    </location>
</feature>
<feature type="sequence conflict" description="In Ref. 3; AAI33986." evidence="5" ref="3">
    <original>I</original>
    <variation>V</variation>
    <location>
        <position position="163"/>
    </location>
</feature>
<feature type="sequence conflict" description="In Ref. 1; AAV65108." evidence="5" ref="1">
    <original>S</original>
    <variation>L</variation>
    <location>
        <position position="273"/>
    </location>
</feature>
<feature type="sequence conflict" description="In Ref. 3; AAI55754." evidence="5" ref="3">
    <original>Y</original>
    <variation>H</variation>
    <location>
        <position position="388"/>
    </location>
</feature>
<feature type="sequence conflict" description="In Ref. 3; AAI33986." evidence="5" ref="3">
    <original>S</original>
    <variation>G</variation>
    <location>
        <position position="424"/>
    </location>
</feature>
<evidence type="ECO:0000250" key="1">
    <source>
        <dbReference type="UniProtKB" id="Q16518"/>
    </source>
</evidence>
<evidence type="ECO:0000250" key="2">
    <source>
        <dbReference type="UniProtKB" id="Q28175"/>
    </source>
</evidence>
<evidence type="ECO:0000269" key="3">
    <source>
    </source>
</evidence>
<evidence type="ECO:0000269" key="4">
    <source>
    </source>
</evidence>
<evidence type="ECO:0000305" key="5"/>
<evidence type="ECO:0000305" key="6">
    <source>
    </source>
</evidence>
<proteinExistence type="evidence at protein level"/>
<protein>
    <recommendedName>
        <fullName>All-trans-retinyl ester 13-cis isomerohydrolase</fullName>
        <shortName>13cIMH</shortName>
        <ecNumber evidence="4">3.1.1.90</ecNumber>
    </recommendedName>
    <alternativeName>
        <fullName>Lutein isomerase</fullName>
    </alternativeName>
    <alternativeName>
        <fullName>Meso-zeaxanthin isomerase</fullName>
        <ecNumber evidence="1">5.3.3.22</ecNumber>
    </alternativeName>
    <alternativeName>
        <fullName>Retinal pigment epithelium-specific 65 kDa protein homolog B</fullName>
        <shortName>RPE56b</shortName>
    </alternativeName>
</protein>